<gene>
    <name evidence="1" type="primary">cshA</name>
    <name type="ordered locus">BCE_0267</name>
</gene>
<evidence type="ECO:0000255" key="1">
    <source>
        <dbReference type="HAMAP-Rule" id="MF_01493"/>
    </source>
</evidence>
<evidence type="ECO:0000256" key="2">
    <source>
        <dbReference type="SAM" id="MobiDB-lite"/>
    </source>
</evidence>
<feature type="chain" id="PRO_0000280050" description="DEAD-box ATP-dependent RNA helicase CshA">
    <location>
        <begin position="1"/>
        <end position="525"/>
    </location>
</feature>
<feature type="domain" description="Helicase ATP-binding" evidence="1">
    <location>
        <begin position="33"/>
        <end position="203"/>
    </location>
</feature>
<feature type="domain" description="Helicase C-terminal" evidence="1">
    <location>
        <begin position="214"/>
        <end position="374"/>
    </location>
</feature>
<feature type="region of interest" description="Disordered" evidence="2">
    <location>
        <begin position="428"/>
        <end position="525"/>
    </location>
</feature>
<feature type="short sequence motif" description="Q motif">
    <location>
        <begin position="2"/>
        <end position="30"/>
    </location>
</feature>
<feature type="short sequence motif" description="DEAD box">
    <location>
        <begin position="151"/>
        <end position="154"/>
    </location>
</feature>
<feature type="compositionally biased region" description="Basic and acidic residues" evidence="2">
    <location>
        <begin position="458"/>
        <end position="503"/>
    </location>
</feature>
<feature type="compositionally biased region" description="Basic residues" evidence="2">
    <location>
        <begin position="515"/>
        <end position="525"/>
    </location>
</feature>
<feature type="binding site" evidence="1">
    <location>
        <begin position="46"/>
        <end position="53"/>
    </location>
    <ligand>
        <name>ATP</name>
        <dbReference type="ChEBI" id="CHEBI:30616"/>
    </ligand>
</feature>
<sequence length="525" mass="58583">MTTFRELGLSDSLLQSVESMGFEEATPIQAETIPHALQGKDIIGQAQTGTGKTAAFGLPLLDKVDTHKESVQGIVIAPTRELAIQVGEELYKIGKHKRVRILPIYGGQDINRQIRALKKHPHIIVGTPGRILDHINRKTLRLQNVETVVLDEADEMLNMGFIEDIEAILTDVPETHQTLLFSATMPDPIRRIAERFMTEPQHIKVKAKEVTMPNIQQFYLEVQEKKKFDVLTRLLDIQSPELAIVFGRTKRRVDELSEALNLRGYAAEGIHGDLTQAKRMSVLRKFKEGSIEVLVATDVAARGLDISGVTHVYNFDIPQDPESYVHRIGRTGRAGKKGIAMLFVTPRESGQLKNIERTTKRKMDRMDAPTLDEALEGQQRLIAEKLQNTIENENLAYYKRIAEEMLEENDSVTVVAAALKMMTKEPDTTPIALTSEPPVVARGGGSKKRGGNGGGYRDGNRNRSRDGRGGDGRNRDRNRDGRNRDGNRDRNRDGGNRGRRGEGQGRPGSSNGRGERKHHSRKPQA</sequence>
<keyword id="KW-0067">ATP-binding</keyword>
<keyword id="KW-0963">Cytoplasm</keyword>
<keyword id="KW-0347">Helicase</keyword>
<keyword id="KW-0378">Hydrolase</keyword>
<keyword id="KW-0547">Nucleotide-binding</keyword>
<keyword id="KW-0694">RNA-binding</keyword>
<keyword id="KW-0346">Stress response</keyword>
<dbReference type="EC" id="3.6.4.13" evidence="1"/>
<dbReference type="EMBL" id="AE017194">
    <property type="protein sequence ID" value="AAS39203.1"/>
    <property type="molecule type" value="Genomic_DNA"/>
</dbReference>
<dbReference type="SMR" id="Q73EU1"/>
<dbReference type="DNASU" id="2752637"/>
<dbReference type="KEGG" id="bca:BCE_0267"/>
<dbReference type="HOGENOM" id="CLU_003041_21_0_9"/>
<dbReference type="Proteomes" id="UP000002527">
    <property type="component" value="Chromosome"/>
</dbReference>
<dbReference type="GO" id="GO:0043590">
    <property type="term" value="C:bacterial nucleoid"/>
    <property type="evidence" value="ECO:0000250"/>
    <property type="project" value="UniProtKB"/>
</dbReference>
<dbReference type="GO" id="GO:0005829">
    <property type="term" value="C:cytosol"/>
    <property type="evidence" value="ECO:0007669"/>
    <property type="project" value="TreeGrafter"/>
</dbReference>
<dbReference type="GO" id="GO:0005840">
    <property type="term" value="C:ribosome"/>
    <property type="evidence" value="ECO:0007669"/>
    <property type="project" value="TreeGrafter"/>
</dbReference>
<dbReference type="GO" id="GO:0005524">
    <property type="term" value="F:ATP binding"/>
    <property type="evidence" value="ECO:0000250"/>
    <property type="project" value="UniProtKB"/>
</dbReference>
<dbReference type="GO" id="GO:0016887">
    <property type="term" value="F:ATP hydrolysis activity"/>
    <property type="evidence" value="ECO:0007669"/>
    <property type="project" value="RHEA"/>
</dbReference>
<dbReference type="GO" id="GO:0003723">
    <property type="term" value="F:RNA binding"/>
    <property type="evidence" value="ECO:0000250"/>
    <property type="project" value="UniProtKB"/>
</dbReference>
<dbReference type="GO" id="GO:0003724">
    <property type="term" value="F:RNA helicase activity"/>
    <property type="evidence" value="ECO:0000250"/>
    <property type="project" value="UniProtKB"/>
</dbReference>
<dbReference type="GO" id="GO:0033592">
    <property type="term" value="F:RNA strand annealing activity"/>
    <property type="evidence" value="ECO:0007669"/>
    <property type="project" value="TreeGrafter"/>
</dbReference>
<dbReference type="GO" id="GO:0009409">
    <property type="term" value="P:response to cold"/>
    <property type="evidence" value="ECO:0007669"/>
    <property type="project" value="TreeGrafter"/>
</dbReference>
<dbReference type="GO" id="GO:0006401">
    <property type="term" value="P:RNA catabolic process"/>
    <property type="evidence" value="ECO:0007669"/>
    <property type="project" value="UniProtKB-UniRule"/>
</dbReference>
<dbReference type="CDD" id="cd00268">
    <property type="entry name" value="DEADc"/>
    <property type="match status" value="1"/>
</dbReference>
<dbReference type="CDD" id="cd18787">
    <property type="entry name" value="SF2_C_DEAD"/>
    <property type="match status" value="1"/>
</dbReference>
<dbReference type="FunFam" id="3.40.50.300:FF:000108">
    <property type="entry name" value="ATP-dependent RNA helicase RhlE"/>
    <property type="match status" value="1"/>
</dbReference>
<dbReference type="FunFam" id="3.40.50.300:FF:000783">
    <property type="entry name" value="DEAD-box ATP-dependent RNA helicase CshA"/>
    <property type="match status" value="1"/>
</dbReference>
<dbReference type="Gene3D" id="3.40.50.300">
    <property type="entry name" value="P-loop containing nucleotide triphosphate hydrolases"/>
    <property type="match status" value="2"/>
</dbReference>
<dbReference type="HAMAP" id="MF_01493">
    <property type="entry name" value="DEAD_helicase_CshA"/>
    <property type="match status" value="1"/>
</dbReference>
<dbReference type="InterPro" id="IPR011545">
    <property type="entry name" value="DEAD/DEAH_box_helicase_dom"/>
</dbReference>
<dbReference type="InterPro" id="IPR050547">
    <property type="entry name" value="DEAD_box_RNA_helicases"/>
</dbReference>
<dbReference type="InterPro" id="IPR030880">
    <property type="entry name" value="DEAD_helicase_CshA"/>
</dbReference>
<dbReference type="InterPro" id="IPR014001">
    <property type="entry name" value="Helicase_ATP-bd"/>
</dbReference>
<dbReference type="InterPro" id="IPR001650">
    <property type="entry name" value="Helicase_C-like"/>
</dbReference>
<dbReference type="InterPro" id="IPR027417">
    <property type="entry name" value="P-loop_NTPase"/>
</dbReference>
<dbReference type="InterPro" id="IPR000629">
    <property type="entry name" value="RNA-helicase_DEAD-box_CS"/>
</dbReference>
<dbReference type="InterPro" id="IPR014014">
    <property type="entry name" value="RNA_helicase_DEAD_Q_motif"/>
</dbReference>
<dbReference type="PANTHER" id="PTHR47963">
    <property type="entry name" value="DEAD-BOX ATP-DEPENDENT RNA HELICASE 47, MITOCHONDRIAL"/>
    <property type="match status" value="1"/>
</dbReference>
<dbReference type="PANTHER" id="PTHR47963:SF5">
    <property type="entry name" value="DEAD-BOX ATP-DEPENDENT RNA HELICASE CSHA"/>
    <property type="match status" value="1"/>
</dbReference>
<dbReference type="Pfam" id="PF00270">
    <property type="entry name" value="DEAD"/>
    <property type="match status" value="1"/>
</dbReference>
<dbReference type="Pfam" id="PF25399">
    <property type="entry name" value="DeaD_dimer"/>
    <property type="match status" value="1"/>
</dbReference>
<dbReference type="Pfam" id="PF00271">
    <property type="entry name" value="Helicase_C"/>
    <property type="match status" value="1"/>
</dbReference>
<dbReference type="SMART" id="SM00487">
    <property type="entry name" value="DEXDc"/>
    <property type="match status" value="1"/>
</dbReference>
<dbReference type="SMART" id="SM00490">
    <property type="entry name" value="HELICc"/>
    <property type="match status" value="1"/>
</dbReference>
<dbReference type="SUPFAM" id="SSF52540">
    <property type="entry name" value="P-loop containing nucleoside triphosphate hydrolases"/>
    <property type="match status" value="1"/>
</dbReference>
<dbReference type="PROSITE" id="PS00039">
    <property type="entry name" value="DEAD_ATP_HELICASE"/>
    <property type="match status" value="1"/>
</dbReference>
<dbReference type="PROSITE" id="PS51192">
    <property type="entry name" value="HELICASE_ATP_BIND_1"/>
    <property type="match status" value="1"/>
</dbReference>
<dbReference type="PROSITE" id="PS51194">
    <property type="entry name" value="HELICASE_CTER"/>
    <property type="match status" value="1"/>
</dbReference>
<dbReference type="PROSITE" id="PS51195">
    <property type="entry name" value="Q_MOTIF"/>
    <property type="match status" value="1"/>
</dbReference>
<reference key="1">
    <citation type="journal article" date="2004" name="Nucleic Acids Res.">
        <title>The genome sequence of Bacillus cereus ATCC 10987 reveals metabolic adaptations and a large plasmid related to Bacillus anthracis pXO1.</title>
        <authorList>
            <person name="Rasko D.A."/>
            <person name="Ravel J."/>
            <person name="Oekstad O.A."/>
            <person name="Helgason E."/>
            <person name="Cer R.Z."/>
            <person name="Jiang L."/>
            <person name="Shores K.A."/>
            <person name="Fouts D.E."/>
            <person name="Tourasse N.J."/>
            <person name="Angiuoli S.V."/>
            <person name="Kolonay J.F."/>
            <person name="Nelson W.C."/>
            <person name="Kolstoe A.-B."/>
            <person name="Fraser C.M."/>
            <person name="Read T.D."/>
        </authorList>
    </citation>
    <scope>NUCLEOTIDE SEQUENCE [LARGE SCALE GENOMIC DNA]</scope>
    <source>
        <strain>ATCC 10987 / NRS 248</strain>
    </source>
</reference>
<accession>Q73EU1</accession>
<name>CSHA_BACC1</name>
<organism>
    <name type="scientific">Bacillus cereus (strain ATCC 10987 / NRS 248)</name>
    <dbReference type="NCBI Taxonomy" id="222523"/>
    <lineage>
        <taxon>Bacteria</taxon>
        <taxon>Bacillati</taxon>
        <taxon>Bacillota</taxon>
        <taxon>Bacilli</taxon>
        <taxon>Bacillales</taxon>
        <taxon>Bacillaceae</taxon>
        <taxon>Bacillus</taxon>
        <taxon>Bacillus cereus group</taxon>
    </lineage>
</organism>
<protein>
    <recommendedName>
        <fullName evidence="1">DEAD-box ATP-dependent RNA helicase CshA</fullName>
        <ecNumber evidence="1">3.6.4.13</ecNumber>
    </recommendedName>
</protein>
<proteinExistence type="inferred from homology"/>
<comment type="function">
    <text evidence="1">DEAD-box RNA helicase possibly involved in RNA degradation. Unwinds dsRNA in both 5'- and 3'-directions, has RNA-dependent ATPase activity.</text>
</comment>
<comment type="catalytic activity">
    <reaction evidence="1">
        <text>ATP + H2O = ADP + phosphate + H(+)</text>
        <dbReference type="Rhea" id="RHEA:13065"/>
        <dbReference type="ChEBI" id="CHEBI:15377"/>
        <dbReference type="ChEBI" id="CHEBI:15378"/>
        <dbReference type="ChEBI" id="CHEBI:30616"/>
        <dbReference type="ChEBI" id="CHEBI:43474"/>
        <dbReference type="ChEBI" id="CHEBI:456216"/>
        <dbReference type="EC" id="3.6.4.13"/>
    </reaction>
</comment>
<comment type="subunit">
    <text evidence="1">Oligomerizes, may be a member of the RNA degradosome.</text>
</comment>
<comment type="subcellular location">
    <subcellularLocation>
        <location evidence="1">Cytoplasm</location>
    </subcellularLocation>
</comment>
<comment type="similarity">
    <text evidence="1">Belongs to the DEAD box helicase family. CshA subfamily.</text>
</comment>